<dbReference type="EC" id="4.2.1.9" evidence="1"/>
<dbReference type="EMBL" id="AM263198">
    <property type="protein sequence ID" value="CAK21420.1"/>
    <property type="molecule type" value="Genomic_DNA"/>
</dbReference>
<dbReference type="RefSeq" id="WP_011702767.1">
    <property type="nucleotide sequence ID" value="NC_008555.1"/>
</dbReference>
<dbReference type="SMR" id="A0AK88"/>
<dbReference type="STRING" id="386043.lwe2002"/>
<dbReference type="GeneID" id="61189902"/>
<dbReference type="KEGG" id="lwe:lwe2002"/>
<dbReference type="eggNOG" id="COG0129">
    <property type="taxonomic scope" value="Bacteria"/>
</dbReference>
<dbReference type="HOGENOM" id="CLU_014271_4_2_9"/>
<dbReference type="OrthoDB" id="9807077at2"/>
<dbReference type="UniPathway" id="UPA00047">
    <property type="reaction ID" value="UER00057"/>
</dbReference>
<dbReference type="UniPathway" id="UPA00049">
    <property type="reaction ID" value="UER00061"/>
</dbReference>
<dbReference type="Proteomes" id="UP000000779">
    <property type="component" value="Chromosome"/>
</dbReference>
<dbReference type="GO" id="GO:0005829">
    <property type="term" value="C:cytosol"/>
    <property type="evidence" value="ECO:0007669"/>
    <property type="project" value="TreeGrafter"/>
</dbReference>
<dbReference type="GO" id="GO:0051537">
    <property type="term" value="F:2 iron, 2 sulfur cluster binding"/>
    <property type="evidence" value="ECO:0007669"/>
    <property type="project" value="UniProtKB-UniRule"/>
</dbReference>
<dbReference type="GO" id="GO:0004160">
    <property type="term" value="F:dihydroxy-acid dehydratase activity"/>
    <property type="evidence" value="ECO:0007669"/>
    <property type="project" value="UniProtKB-UniRule"/>
</dbReference>
<dbReference type="GO" id="GO:0000287">
    <property type="term" value="F:magnesium ion binding"/>
    <property type="evidence" value="ECO:0007669"/>
    <property type="project" value="UniProtKB-UniRule"/>
</dbReference>
<dbReference type="GO" id="GO:0009097">
    <property type="term" value="P:isoleucine biosynthetic process"/>
    <property type="evidence" value="ECO:0007669"/>
    <property type="project" value="UniProtKB-UniRule"/>
</dbReference>
<dbReference type="GO" id="GO:0009099">
    <property type="term" value="P:L-valine biosynthetic process"/>
    <property type="evidence" value="ECO:0007669"/>
    <property type="project" value="UniProtKB-UniRule"/>
</dbReference>
<dbReference type="FunFam" id="3.50.30.80:FF:000001">
    <property type="entry name" value="Dihydroxy-acid dehydratase"/>
    <property type="match status" value="1"/>
</dbReference>
<dbReference type="Gene3D" id="3.50.30.80">
    <property type="entry name" value="IlvD/EDD C-terminal domain-like"/>
    <property type="match status" value="1"/>
</dbReference>
<dbReference type="HAMAP" id="MF_00012">
    <property type="entry name" value="IlvD"/>
    <property type="match status" value="1"/>
</dbReference>
<dbReference type="InterPro" id="IPR042096">
    <property type="entry name" value="Dihydro-acid_dehy_C"/>
</dbReference>
<dbReference type="InterPro" id="IPR004404">
    <property type="entry name" value="DihydroxyA_deHydtase"/>
</dbReference>
<dbReference type="InterPro" id="IPR020558">
    <property type="entry name" value="DiOHA_6PGluconate_deHydtase_CS"/>
</dbReference>
<dbReference type="InterPro" id="IPR056740">
    <property type="entry name" value="ILV_EDD_C"/>
</dbReference>
<dbReference type="InterPro" id="IPR000581">
    <property type="entry name" value="ILV_EDD_N"/>
</dbReference>
<dbReference type="InterPro" id="IPR037237">
    <property type="entry name" value="IlvD/EDD_N"/>
</dbReference>
<dbReference type="NCBIfam" id="TIGR00110">
    <property type="entry name" value="ilvD"/>
    <property type="match status" value="1"/>
</dbReference>
<dbReference type="NCBIfam" id="NF002068">
    <property type="entry name" value="PRK00911.1"/>
    <property type="match status" value="1"/>
</dbReference>
<dbReference type="PANTHER" id="PTHR43661">
    <property type="entry name" value="D-XYLONATE DEHYDRATASE"/>
    <property type="match status" value="1"/>
</dbReference>
<dbReference type="PANTHER" id="PTHR43661:SF3">
    <property type="entry name" value="D-XYLONATE DEHYDRATASE YAGF-RELATED"/>
    <property type="match status" value="1"/>
</dbReference>
<dbReference type="Pfam" id="PF24877">
    <property type="entry name" value="ILV_EDD_C"/>
    <property type="match status" value="1"/>
</dbReference>
<dbReference type="Pfam" id="PF00920">
    <property type="entry name" value="ILVD_EDD_N"/>
    <property type="match status" value="1"/>
</dbReference>
<dbReference type="SUPFAM" id="SSF143975">
    <property type="entry name" value="IlvD/EDD N-terminal domain-like"/>
    <property type="match status" value="1"/>
</dbReference>
<dbReference type="SUPFAM" id="SSF52016">
    <property type="entry name" value="LeuD/IlvD-like"/>
    <property type="match status" value="1"/>
</dbReference>
<dbReference type="PROSITE" id="PS00886">
    <property type="entry name" value="ILVD_EDD_1"/>
    <property type="match status" value="1"/>
</dbReference>
<dbReference type="PROSITE" id="PS00887">
    <property type="entry name" value="ILVD_EDD_2"/>
    <property type="match status" value="1"/>
</dbReference>
<keyword id="KW-0001">2Fe-2S</keyword>
<keyword id="KW-0028">Amino-acid biosynthesis</keyword>
<keyword id="KW-0100">Branched-chain amino acid biosynthesis</keyword>
<keyword id="KW-0408">Iron</keyword>
<keyword id="KW-0411">Iron-sulfur</keyword>
<keyword id="KW-0456">Lyase</keyword>
<keyword id="KW-0460">Magnesium</keyword>
<keyword id="KW-0479">Metal-binding</keyword>
<comment type="function">
    <text evidence="1">Functions in the biosynthesis of branched-chain amino acids. Catalyzes the dehydration of (2R,3R)-2,3-dihydroxy-3-methylpentanoate (2,3-dihydroxy-3-methylvalerate) into 2-oxo-3-methylpentanoate (2-oxo-3-methylvalerate) and of (2R)-2,3-dihydroxy-3-methylbutanoate (2,3-dihydroxyisovalerate) into 2-oxo-3-methylbutanoate (2-oxoisovalerate), the penultimate precursor to L-isoleucine and L-valine, respectively.</text>
</comment>
<comment type="catalytic activity">
    <reaction evidence="1">
        <text>(2R)-2,3-dihydroxy-3-methylbutanoate = 3-methyl-2-oxobutanoate + H2O</text>
        <dbReference type="Rhea" id="RHEA:24809"/>
        <dbReference type="ChEBI" id="CHEBI:11851"/>
        <dbReference type="ChEBI" id="CHEBI:15377"/>
        <dbReference type="ChEBI" id="CHEBI:49072"/>
        <dbReference type="EC" id="4.2.1.9"/>
    </reaction>
    <physiologicalReaction direction="left-to-right" evidence="1">
        <dbReference type="Rhea" id="RHEA:24810"/>
    </physiologicalReaction>
</comment>
<comment type="catalytic activity">
    <reaction evidence="1">
        <text>(2R,3R)-2,3-dihydroxy-3-methylpentanoate = (S)-3-methyl-2-oxopentanoate + H2O</text>
        <dbReference type="Rhea" id="RHEA:27694"/>
        <dbReference type="ChEBI" id="CHEBI:15377"/>
        <dbReference type="ChEBI" id="CHEBI:35146"/>
        <dbReference type="ChEBI" id="CHEBI:49258"/>
        <dbReference type="EC" id="4.2.1.9"/>
    </reaction>
    <physiologicalReaction direction="left-to-right" evidence="1">
        <dbReference type="Rhea" id="RHEA:27695"/>
    </physiologicalReaction>
</comment>
<comment type="cofactor">
    <cofactor evidence="1">
        <name>[2Fe-2S] cluster</name>
        <dbReference type="ChEBI" id="CHEBI:190135"/>
    </cofactor>
    <text evidence="1">Binds 1 [2Fe-2S] cluster per subunit. This cluster acts as a Lewis acid cofactor.</text>
</comment>
<comment type="cofactor">
    <cofactor evidence="1">
        <name>Mg(2+)</name>
        <dbReference type="ChEBI" id="CHEBI:18420"/>
    </cofactor>
</comment>
<comment type="pathway">
    <text evidence="1">Amino-acid biosynthesis; L-isoleucine biosynthesis; L-isoleucine from 2-oxobutanoate: step 3/4.</text>
</comment>
<comment type="pathway">
    <text evidence="1">Amino-acid biosynthesis; L-valine biosynthesis; L-valine from pyruvate: step 3/4.</text>
</comment>
<comment type="subunit">
    <text evidence="1">Homodimer.</text>
</comment>
<comment type="similarity">
    <text evidence="1">Belongs to the IlvD/Edd family.</text>
</comment>
<organism>
    <name type="scientific">Listeria welshimeri serovar 6b (strain ATCC 35897 / DSM 20650 / CCUG 15529 / CIP 8149 / NCTC 11857 / SLCC 5334 / V8)</name>
    <dbReference type="NCBI Taxonomy" id="386043"/>
    <lineage>
        <taxon>Bacteria</taxon>
        <taxon>Bacillati</taxon>
        <taxon>Bacillota</taxon>
        <taxon>Bacilli</taxon>
        <taxon>Bacillales</taxon>
        <taxon>Listeriaceae</taxon>
        <taxon>Listeria</taxon>
    </lineage>
</organism>
<proteinExistence type="inferred from homology"/>
<feature type="chain" id="PRO_1000001000" description="Dihydroxy-acid dehydratase">
    <location>
        <begin position="1"/>
        <end position="564"/>
    </location>
</feature>
<feature type="active site" description="Proton acceptor" evidence="1">
    <location>
        <position position="473"/>
    </location>
</feature>
<feature type="binding site" evidence="1">
    <location>
        <position position="80"/>
    </location>
    <ligand>
        <name>Mg(2+)</name>
        <dbReference type="ChEBI" id="CHEBI:18420"/>
    </ligand>
</feature>
<feature type="binding site" evidence="1">
    <location>
        <position position="121"/>
    </location>
    <ligand>
        <name>[2Fe-2S] cluster</name>
        <dbReference type="ChEBI" id="CHEBI:190135"/>
    </ligand>
</feature>
<feature type="binding site" evidence="1">
    <location>
        <position position="122"/>
    </location>
    <ligand>
        <name>Mg(2+)</name>
        <dbReference type="ChEBI" id="CHEBI:18420"/>
    </ligand>
</feature>
<feature type="binding site" description="via carbamate group" evidence="1">
    <location>
        <position position="123"/>
    </location>
    <ligand>
        <name>Mg(2+)</name>
        <dbReference type="ChEBI" id="CHEBI:18420"/>
    </ligand>
</feature>
<feature type="binding site" evidence="1">
    <location>
        <position position="194"/>
    </location>
    <ligand>
        <name>[2Fe-2S] cluster</name>
        <dbReference type="ChEBI" id="CHEBI:190135"/>
    </ligand>
</feature>
<feature type="binding site" evidence="1">
    <location>
        <position position="447"/>
    </location>
    <ligand>
        <name>Mg(2+)</name>
        <dbReference type="ChEBI" id="CHEBI:18420"/>
    </ligand>
</feature>
<feature type="modified residue" description="N6-carboxylysine" evidence="1">
    <location>
        <position position="123"/>
    </location>
</feature>
<accession>A0AK88</accession>
<gene>
    <name evidence="1" type="primary">ilvD</name>
    <name type="ordered locus">lwe2002</name>
</gene>
<evidence type="ECO:0000255" key="1">
    <source>
        <dbReference type="HAMAP-Rule" id="MF_00012"/>
    </source>
</evidence>
<name>ILVD_LISW6</name>
<sequence length="564" mass="59878">MRSDKIKKGVEQAPARSLLHATGQIKSPGDMDKPFIAICNSYIDIVPGHVHLRELADVAKEAIREAGGIPFEFNTIGVDDGIAMGHIGMRYSLPSREVIADAAETVINAHWFDGVFYIPNCDKITPGMLLASVRTNVPAIFCSGGPMKAGLSAHGKALTLSSVFEAVGAFKDGSMSQEDFLDMEANACPTCGSCAGMFTANSMNCLMEILGMAVPGNGTTLAVSDARRELIRESAFHLMDLVKKDIRPRDIITKDAIDDAFALDMAMGGSTNTVLHTLALANEAGIEDYDLERINDIAKRVPYLSKIAPSSSYSMHDVHEAGGVSAIVKELVDLGGAIHPDRITVTGKTIRENVADAKINNTDVIHPKENPYSPVGGLSMLFGNIAPKGAAIKVGGVDPSVQVFKGEAICFSSHDEAVEAIDNHTVREGHVVVIRYEGPKGGPGMPEMLAPTSSIVGRGLGKDVALITDGRFSGATRGIAVGHISPEAAAGGPIALVHDGDIITIDLPNRTLNVDVSDEVLEERRKELPKFKAKVKTGYLARYTALVTSAHTGGILQIPEDLID</sequence>
<reference key="1">
    <citation type="journal article" date="2006" name="J. Bacteriol.">
        <title>Whole-genome sequence of Listeria welshimeri reveals common steps in genome reduction with Listeria innocua as compared to Listeria monocytogenes.</title>
        <authorList>
            <person name="Hain T."/>
            <person name="Steinweg C."/>
            <person name="Kuenne C.T."/>
            <person name="Billion A."/>
            <person name="Ghai R."/>
            <person name="Chatterjee S.S."/>
            <person name="Domann E."/>
            <person name="Kaerst U."/>
            <person name="Goesmann A."/>
            <person name="Bekel T."/>
            <person name="Bartels D."/>
            <person name="Kaiser O."/>
            <person name="Meyer F."/>
            <person name="Puehler A."/>
            <person name="Weisshaar B."/>
            <person name="Wehland J."/>
            <person name="Liang C."/>
            <person name="Dandekar T."/>
            <person name="Lampidis R."/>
            <person name="Kreft J."/>
            <person name="Goebel W."/>
            <person name="Chakraborty T."/>
        </authorList>
    </citation>
    <scope>NUCLEOTIDE SEQUENCE [LARGE SCALE GENOMIC DNA]</scope>
    <source>
        <strain>ATCC 35897 / DSM 20650 / CCUG 15529 / CIP 8149 / NCTC 11857 / SLCC 5334 / V8</strain>
    </source>
</reference>
<protein>
    <recommendedName>
        <fullName evidence="1">Dihydroxy-acid dehydratase</fullName>
        <shortName evidence="1">DAD</shortName>
        <ecNumber evidence="1">4.2.1.9</ecNumber>
    </recommendedName>
</protein>